<protein>
    <recommendedName>
        <fullName evidence="1">Phosphoribosylformylglycinamidine cyclo-ligase</fullName>
        <ecNumber evidence="1">6.3.3.1</ecNumber>
    </recommendedName>
    <alternativeName>
        <fullName evidence="1">AIR synthase</fullName>
    </alternativeName>
    <alternativeName>
        <fullName evidence="1">AIRS</fullName>
    </alternativeName>
    <alternativeName>
        <fullName evidence="1">Phosphoribosyl-aminoimidazole synthetase</fullName>
    </alternativeName>
</protein>
<sequence length="340" mass="36433">MTNKNAYAQSGVDVEAGYEVVERIKKHVARTESAGVMGALGGFGGMFDLSKTGVKEPVLISGTDGVGTKLMLAIKYDKHDTIGQDCVAMCVNDIIAAGAEPLYFLDYVATGKNEPAKLEQVVAGVAEGCVQAGAALIGGETAEMPGMYGEDDYDLAGFAVGVAEKSQIIDGSKVVEGDVLLGLASSGIHSNGYSLVRRVFADYTGEEVLPELEGKKLKEVLLEPTRIYVKAVLPLIKEELVNGIAHITGGGFIENVPRMFADDLAAEIDESKVPVLPIFKALEKYGQIKHEEMFEIFNMGVGLMLAVSPENVERVKELLDEAVYEIGRIVKKENESVIIK</sequence>
<comment type="catalytic activity">
    <reaction evidence="1">
        <text>2-formamido-N(1)-(5-O-phospho-beta-D-ribosyl)acetamidine + ATP = 5-amino-1-(5-phospho-beta-D-ribosyl)imidazole + ADP + phosphate + H(+)</text>
        <dbReference type="Rhea" id="RHEA:23032"/>
        <dbReference type="ChEBI" id="CHEBI:15378"/>
        <dbReference type="ChEBI" id="CHEBI:30616"/>
        <dbReference type="ChEBI" id="CHEBI:43474"/>
        <dbReference type="ChEBI" id="CHEBI:137981"/>
        <dbReference type="ChEBI" id="CHEBI:147287"/>
        <dbReference type="ChEBI" id="CHEBI:456216"/>
        <dbReference type="EC" id="6.3.3.1"/>
    </reaction>
</comment>
<comment type="pathway">
    <text evidence="1">Purine metabolism; IMP biosynthesis via de novo pathway; 5-amino-1-(5-phospho-D-ribosyl)imidazole from N(2)-formyl-N(1)-(5-phospho-D-ribosyl)glycinamide: step 2/2.</text>
</comment>
<comment type="subcellular location">
    <subcellularLocation>
        <location evidence="1">Cytoplasm</location>
    </subcellularLocation>
</comment>
<comment type="similarity">
    <text evidence="1">Belongs to the AIR synthase family.</text>
</comment>
<name>PUR5_STRZP</name>
<proteinExistence type="inferred from homology"/>
<feature type="chain" id="PRO_1000148303" description="Phosphoribosylformylglycinamidine cyclo-ligase">
    <location>
        <begin position="1"/>
        <end position="340"/>
    </location>
</feature>
<keyword id="KW-0067">ATP-binding</keyword>
<keyword id="KW-0963">Cytoplasm</keyword>
<keyword id="KW-0436">Ligase</keyword>
<keyword id="KW-0547">Nucleotide-binding</keyword>
<keyword id="KW-0658">Purine biosynthesis</keyword>
<gene>
    <name evidence="1" type="primary">purM</name>
    <name type="ordered locus">SPP_0112</name>
</gene>
<evidence type="ECO:0000255" key="1">
    <source>
        <dbReference type="HAMAP-Rule" id="MF_00741"/>
    </source>
</evidence>
<dbReference type="EC" id="6.3.3.1" evidence="1"/>
<dbReference type="EMBL" id="CP000920">
    <property type="protein sequence ID" value="ACO21666.1"/>
    <property type="molecule type" value="Genomic_DNA"/>
</dbReference>
<dbReference type="RefSeq" id="WP_000182586.1">
    <property type="nucleotide sequence ID" value="NC_012467.1"/>
</dbReference>
<dbReference type="SMR" id="C1CHV9"/>
<dbReference type="GeneID" id="45652443"/>
<dbReference type="KEGG" id="spp:SPP_0112"/>
<dbReference type="HOGENOM" id="CLU_047116_0_0_9"/>
<dbReference type="UniPathway" id="UPA00074">
    <property type="reaction ID" value="UER00129"/>
</dbReference>
<dbReference type="GO" id="GO:0005829">
    <property type="term" value="C:cytosol"/>
    <property type="evidence" value="ECO:0007669"/>
    <property type="project" value="TreeGrafter"/>
</dbReference>
<dbReference type="GO" id="GO:0005524">
    <property type="term" value="F:ATP binding"/>
    <property type="evidence" value="ECO:0007669"/>
    <property type="project" value="UniProtKB-KW"/>
</dbReference>
<dbReference type="GO" id="GO:0004637">
    <property type="term" value="F:phosphoribosylamine-glycine ligase activity"/>
    <property type="evidence" value="ECO:0007669"/>
    <property type="project" value="TreeGrafter"/>
</dbReference>
<dbReference type="GO" id="GO:0004641">
    <property type="term" value="F:phosphoribosylformylglycinamidine cyclo-ligase activity"/>
    <property type="evidence" value="ECO:0007669"/>
    <property type="project" value="UniProtKB-UniRule"/>
</dbReference>
<dbReference type="GO" id="GO:0006189">
    <property type="term" value="P:'de novo' IMP biosynthetic process"/>
    <property type="evidence" value="ECO:0007669"/>
    <property type="project" value="UniProtKB-UniRule"/>
</dbReference>
<dbReference type="GO" id="GO:0046084">
    <property type="term" value="P:adenine biosynthetic process"/>
    <property type="evidence" value="ECO:0007669"/>
    <property type="project" value="TreeGrafter"/>
</dbReference>
<dbReference type="CDD" id="cd02196">
    <property type="entry name" value="PurM"/>
    <property type="match status" value="1"/>
</dbReference>
<dbReference type="FunFam" id="3.30.1330.10:FF:000001">
    <property type="entry name" value="Phosphoribosylformylglycinamidine cyclo-ligase"/>
    <property type="match status" value="1"/>
</dbReference>
<dbReference type="FunFam" id="3.90.650.10:FF:000011">
    <property type="entry name" value="Phosphoribosylformylglycinamidine cyclo-ligase"/>
    <property type="match status" value="1"/>
</dbReference>
<dbReference type="Gene3D" id="3.90.650.10">
    <property type="entry name" value="PurM-like C-terminal domain"/>
    <property type="match status" value="1"/>
</dbReference>
<dbReference type="Gene3D" id="3.30.1330.10">
    <property type="entry name" value="PurM-like, N-terminal domain"/>
    <property type="match status" value="1"/>
</dbReference>
<dbReference type="HAMAP" id="MF_00741">
    <property type="entry name" value="AIRS"/>
    <property type="match status" value="1"/>
</dbReference>
<dbReference type="InterPro" id="IPR010918">
    <property type="entry name" value="PurM-like_C_dom"/>
</dbReference>
<dbReference type="InterPro" id="IPR036676">
    <property type="entry name" value="PurM-like_C_sf"/>
</dbReference>
<dbReference type="InterPro" id="IPR016188">
    <property type="entry name" value="PurM-like_N"/>
</dbReference>
<dbReference type="InterPro" id="IPR036921">
    <property type="entry name" value="PurM-like_N_sf"/>
</dbReference>
<dbReference type="InterPro" id="IPR004733">
    <property type="entry name" value="PurM_cligase"/>
</dbReference>
<dbReference type="NCBIfam" id="TIGR00878">
    <property type="entry name" value="purM"/>
    <property type="match status" value="1"/>
</dbReference>
<dbReference type="PANTHER" id="PTHR10520:SF12">
    <property type="entry name" value="TRIFUNCTIONAL PURINE BIOSYNTHETIC PROTEIN ADENOSINE-3"/>
    <property type="match status" value="1"/>
</dbReference>
<dbReference type="PANTHER" id="PTHR10520">
    <property type="entry name" value="TRIFUNCTIONAL PURINE BIOSYNTHETIC PROTEIN ADENOSINE-3-RELATED"/>
    <property type="match status" value="1"/>
</dbReference>
<dbReference type="Pfam" id="PF00586">
    <property type="entry name" value="AIRS"/>
    <property type="match status" value="1"/>
</dbReference>
<dbReference type="Pfam" id="PF02769">
    <property type="entry name" value="AIRS_C"/>
    <property type="match status" value="1"/>
</dbReference>
<dbReference type="SUPFAM" id="SSF56042">
    <property type="entry name" value="PurM C-terminal domain-like"/>
    <property type="match status" value="1"/>
</dbReference>
<dbReference type="SUPFAM" id="SSF55326">
    <property type="entry name" value="PurM N-terminal domain-like"/>
    <property type="match status" value="1"/>
</dbReference>
<organism>
    <name type="scientific">Streptococcus pneumoniae (strain P1031)</name>
    <dbReference type="NCBI Taxonomy" id="488223"/>
    <lineage>
        <taxon>Bacteria</taxon>
        <taxon>Bacillati</taxon>
        <taxon>Bacillota</taxon>
        <taxon>Bacilli</taxon>
        <taxon>Lactobacillales</taxon>
        <taxon>Streptococcaceae</taxon>
        <taxon>Streptococcus</taxon>
    </lineage>
</organism>
<accession>C1CHV9</accession>
<reference key="1">
    <citation type="journal article" date="2010" name="Genome Biol.">
        <title>Structure and dynamics of the pan-genome of Streptococcus pneumoniae and closely related species.</title>
        <authorList>
            <person name="Donati C."/>
            <person name="Hiller N.L."/>
            <person name="Tettelin H."/>
            <person name="Muzzi A."/>
            <person name="Croucher N.J."/>
            <person name="Angiuoli S.V."/>
            <person name="Oggioni M."/>
            <person name="Dunning Hotopp J.C."/>
            <person name="Hu F.Z."/>
            <person name="Riley D.R."/>
            <person name="Covacci A."/>
            <person name="Mitchell T.J."/>
            <person name="Bentley S.D."/>
            <person name="Kilian M."/>
            <person name="Ehrlich G.D."/>
            <person name="Rappuoli R."/>
            <person name="Moxon E.R."/>
            <person name="Masignani V."/>
        </authorList>
    </citation>
    <scope>NUCLEOTIDE SEQUENCE [LARGE SCALE GENOMIC DNA]</scope>
    <source>
        <strain>P1031</strain>
    </source>
</reference>